<sequence length="83" mass="9299">MKTLLLTLVVVTIVCLDLGYTRRCFNQQSSEPQTNKSCPPGENSCYNKQWRDHRGTIIERGCGCPQVKSGIKLTCCQSDDCNN</sequence>
<comment type="function">
    <text evidence="3">Binds to muscle nicotinic acetylcholine receptor (nAChR) and inhibit acetylcholine from binding to the receptor, thereby impairing neuromuscular transmission.</text>
</comment>
<comment type="subcellular location">
    <subcellularLocation>
        <location evidence="1">Secreted</location>
    </subcellularLocation>
</comment>
<comment type="tissue specificity">
    <text evidence="4">Expressed by the venom gland.</text>
</comment>
<comment type="similarity">
    <text evidence="4">Belongs to the three-finger toxin family. Short-chain subfamily. Type I alpha-neurotoxin sub-subfamily.</text>
</comment>
<evidence type="ECO:0000250" key="1"/>
<evidence type="ECO:0000250" key="2">
    <source>
        <dbReference type="UniProtKB" id="P0C1Z0"/>
    </source>
</evidence>
<evidence type="ECO:0000250" key="3">
    <source>
        <dbReference type="UniProtKB" id="P60775"/>
    </source>
</evidence>
<evidence type="ECO:0000305" key="4"/>
<name>3S14_LATLA</name>
<protein>
    <recommendedName>
        <fullName>Short neurotoxin VAN-29</fullName>
    </recommendedName>
</protein>
<keyword id="KW-0008">Acetylcholine receptor inhibiting toxin</keyword>
<keyword id="KW-1015">Disulfide bond</keyword>
<keyword id="KW-0872">Ion channel impairing toxin</keyword>
<keyword id="KW-0528">Neurotoxin</keyword>
<keyword id="KW-0629">Postsynaptic neurotoxin</keyword>
<keyword id="KW-1185">Reference proteome</keyword>
<keyword id="KW-0964">Secreted</keyword>
<keyword id="KW-0732">Signal</keyword>
<keyword id="KW-0800">Toxin</keyword>
<organism>
    <name type="scientific">Laticauda laticaudata</name>
    <name type="common">Blue-ringed sea krait</name>
    <name type="synonym">Blue-lipped sea krait</name>
    <dbReference type="NCBI Taxonomy" id="8630"/>
    <lineage>
        <taxon>Eukaryota</taxon>
        <taxon>Metazoa</taxon>
        <taxon>Chordata</taxon>
        <taxon>Craniata</taxon>
        <taxon>Vertebrata</taxon>
        <taxon>Euteleostomi</taxon>
        <taxon>Lepidosauria</taxon>
        <taxon>Squamata</taxon>
        <taxon>Bifurcata</taxon>
        <taxon>Unidentata</taxon>
        <taxon>Episquamata</taxon>
        <taxon>Toxicofera</taxon>
        <taxon>Serpentes</taxon>
        <taxon>Colubroidea</taxon>
        <taxon>Elapidae</taxon>
        <taxon>Laticaudinae</taxon>
        <taxon>Laticauda</taxon>
    </lineage>
</organism>
<dbReference type="EMBL" id="AB017957">
    <property type="protein sequence ID" value="BAA75777.1"/>
    <property type="molecule type" value="mRNA"/>
</dbReference>
<dbReference type="SMR" id="Q9YGW8"/>
<dbReference type="Proteomes" id="UP000694406">
    <property type="component" value="Unplaced"/>
</dbReference>
<dbReference type="GO" id="GO:0005576">
    <property type="term" value="C:extracellular region"/>
    <property type="evidence" value="ECO:0007669"/>
    <property type="project" value="UniProtKB-SubCell"/>
</dbReference>
<dbReference type="GO" id="GO:0030550">
    <property type="term" value="F:acetylcholine receptor inhibitor activity"/>
    <property type="evidence" value="ECO:0007669"/>
    <property type="project" value="UniProtKB-KW"/>
</dbReference>
<dbReference type="GO" id="GO:0099106">
    <property type="term" value="F:ion channel regulator activity"/>
    <property type="evidence" value="ECO:0007669"/>
    <property type="project" value="UniProtKB-KW"/>
</dbReference>
<dbReference type="GO" id="GO:0090729">
    <property type="term" value="F:toxin activity"/>
    <property type="evidence" value="ECO:0007669"/>
    <property type="project" value="UniProtKB-KW"/>
</dbReference>
<dbReference type="CDD" id="cd00206">
    <property type="entry name" value="TFP_snake_toxin"/>
    <property type="match status" value="1"/>
</dbReference>
<dbReference type="FunFam" id="2.10.60.10:FF:000024">
    <property type="entry name" value="Cytotoxin 1"/>
    <property type="match status" value="1"/>
</dbReference>
<dbReference type="Gene3D" id="2.10.60.10">
    <property type="entry name" value="CD59"/>
    <property type="match status" value="1"/>
</dbReference>
<dbReference type="InterPro" id="IPR003571">
    <property type="entry name" value="Snake_3FTx"/>
</dbReference>
<dbReference type="InterPro" id="IPR045860">
    <property type="entry name" value="Snake_toxin-like_sf"/>
</dbReference>
<dbReference type="InterPro" id="IPR018354">
    <property type="entry name" value="Snake_toxin_con_site"/>
</dbReference>
<dbReference type="InterPro" id="IPR054131">
    <property type="entry name" value="Toxin_cobra-type"/>
</dbReference>
<dbReference type="Pfam" id="PF21947">
    <property type="entry name" value="Toxin_cobra-type"/>
    <property type="match status" value="1"/>
</dbReference>
<dbReference type="SUPFAM" id="SSF57302">
    <property type="entry name" value="Snake toxin-like"/>
    <property type="match status" value="1"/>
</dbReference>
<dbReference type="PROSITE" id="PS00272">
    <property type="entry name" value="SNAKE_TOXIN"/>
    <property type="match status" value="1"/>
</dbReference>
<reference key="1">
    <citation type="submission" date="1998-09" db="EMBL/GenBank/DDBJ databases">
        <title>Classification of sea snakes in genus Laticauda by nucleotide sequences encoding short chain neurotoxins.</title>
        <authorList>
            <person name="Kariya Y."/>
            <person name="Araki S."/>
            <person name="Agu H."/>
            <person name="Tamiya T."/>
            <person name="Tsuchiya T."/>
        </authorList>
    </citation>
    <scope>NUCLEOTIDE SEQUENCE [MRNA]</scope>
    <source>
        <tissue>Venom gland</tissue>
    </source>
</reference>
<feature type="signal peptide" evidence="1">
    <location>
        <begin position="1"/>
        <end position="21"/>
    </location>
</feature>
<feature type="chain" id="PRO_0000035445" description="Short neurotoxin VAN-29">
    <location>
        <begin position="22"/>
        <end position="83"/>
    </location>
</feature>
<feature type="disulfide bond" evidence="2">
    <location>
        <begin position="24"/>
        <end position="45"/>
    </location>
</feature>
<feature type="disulfide bond" evidence="2">
    <location>
        <begin position="38"/>
        <end position="62"/>
    </location>
</feature>
<feature type="disulfide bond" evidence="2">
    <location>
        <begin position="64"/>
        <end position="75"/>
    </location>
</feature>
<feature type="disulfide bond" evidence="2">
    <location>
        <begin position="76"/>
        <end position="81"/>
    </location>
</feature>
<proteinExistence type="inferred from homology"/>
<accession>Q9YGW8</accession>